<reference key="1">
    <citation type="journal article" date="1993" name="Protein Sci.">
        <title>Sequence analyses and evolutionary relationships among the energy-coupling proteins Enzyme I and HPr of the bacterial phosphoenolpyruvate: sugar phosphotransferase system.</title>
        <authorList>
            <person name="Reizer J."/>
            <person name="Hoischen C."/>
            <person name="Reizer A."/>
            <person name="Pham T.N."/>
            <person name="Saier M.H. Jr."/>
        </authorList>
    </citation>
    <scope>NUCLEOTIDE SEQUENCE [GENOMIC DNA]</scope>
</reference>
<reference key="2">
    <citation type="submission" date="1997-03" db="UniProtKB">
        <authorList>
            <person name="Reizer J."/>
        </authorList>
    </citation>
    <scope>SEQUENCE REVISION</scope>
</reference>
<reference key="3">
    <citation type="journal article" date="1997" name="Nature">
        <title>The complete genome sequence of the Gram-positive bacterium Bacillus subtilis.</title>
        <authorList>
            <person name="Kunst F."/>
            <person name="Ogasawara N."/>
            <person name="Moszer I."/>
            <person name="Albertini A.M."/>
            <person name="Alloni G."/>
            <person name="Azevedo V."/>
            <person name="Bertero M.G."/>
            <person name="Bessieres P."/>
            <person name="Bolotin A."/>
            <person name="Borchert S."/>
            <person name="Borriss R."/>
            <person name="Boursier L."/>
            <person name="Brans A."/>
            <person name="Braun M."/>
            <person name="Brignell S.C."/>
            <person name="Bron S."/>
            <person name="Brouillet S."/>
            <person name="Bruschi C.V."/>
            <person name="Caldwell B."/>
            <person name="Capuano V."/>
            <person name="Carter N.M."/>
            <person name="Choi S.-K."/>
            <person name="Codani J.-J."/>
            <person name="Connerton I.F."/>
            <person name="Cummings N.J."/>
            <person name="Daniel R.A."/>
            <person name="Denizot F."/>
            <person name="Devine K.M."/>
            <person name="Duesterhoeft A."/>
            <person name="Ehrlich S.D."/>
            <person name="Emmerson P.T."/>
            <person name="Entian K.-D."/>
            <person name="Errington J."/>
            <person name="Fabret C."/>
            <person name="Ferrari E."/>
            <person name="Foulger D."/>
            <person name="Fritz C."/>
            <person name="Fujita M."/>
            <person name="Fujita Y."/>
            <person name="Fuma S."/>
            <person name="Galizzi A."/>
            <person name="Galleron N."/>
            <person name="Ghim S.-Y."/>
            <person name="Glaser P."/>
            <person name="Goffeau A."/>
            <person name="Golightly E.J."/>
            <person name="Grandi G."/>
            <person name="Guiseppi G."/>
            <person name="Guy B.J."/>
            <person name="Haga K."/>
            <person name="Haiech J."/>
            <person name="Harwood C.R."/>
            <person name="Henaut A."/>
            <person name="Hilbert H."/>
            <person name="Holsappel S."/>
            <person name="Hosono S."/>
            <person name="Hullo M.-F."/>
            <person name="Itaya M."/>
            <person name="Jones L.-M."/>
            <person name="Joris B."/>
            <person name="Karamata D."/>
            <person name="Kasahara Y."/>
            <person name="Klaerr-Blanchard M."/>
            <person name="Klein C."/>
            <person name="Kobayashi Y."/>
            <person name="Koetter P."/>
            <person name="Koningstein G."/>
            <person name="Krogh S."/>
            <person name="Kumano M."/>
            <person name="Kurita K."/>
            <person name="Lapidus A."/>
            <person name="Lardinois S."/>
            <person name="Lauber J."/>
            <person name="Lazarevic V."/>
            <person name="Lee S.-M."/>
            <person name="Levine A."/>
            <person name="Liu H."/>
            <person name="Masuda S."/>
            <person name="Mauel C."/>
            <person name="Medigue C."/>
            <person name="Medina N."/>
            <person name="Mellado R.P."/>
            <person name="Mizuno M."/>
            <person name="Moestl D."/>
            <person name="Nakai S."/>
            <person name="Noback M."/>
            <person name="Noone D."/>
            <person name="O'Reilly M."/>
            <person name="Ogawa K."/>
            <person name="Ogiwara A."/>
            <person name="Oudega B."/>
            <person name="Park S.-H."/>
            <person name="Parro V."/>
            <person name="Pohl T.M."/>
            <person name="Portetelle D."/>
            <person name="Porwollik S."/>
            <person name="Prescott A.M."/>
            <person name="Presecan E."/>
            <person name="Pujic P."/>
            <person name="Purnelle B."/>
            <person name="Rapoport G."/>
            <person name="Rey M."/>
            <person name="Reynolds S."/>
            <person name="Rieger M."/>
            <person name="Rivolta C."/>
            <person name="Rocha E."/>
            <person name="Roche B."/>
            <person name="Rose M."/>
            <person name="Sadaie Y."/>
            <person name="Sato T."/>
            <person name="Scanlan E."/>
            <person name="Schleich S."/>
            <person name="Schroeter R."/>
            <person name="Scoffone F."/>
            <person name="Sekiguchi J."/>
            <person name="Sekowska A."/>
            <person name="Seror S.J."/>
            <person name="Serror P."/>
            <person name="Shin B.-S."/>
            <person name="Soldo B."/>
            <person name="Sorokin A."/>
            <person name="Tacconi E."/>
            <person name="Takagi T."/>
            <person name="Takahashi H."/>
            <person name="Takemaru K."/>
            <person name="Takeuchi M."/>
            <person name="Tamakoshi A."/>
            <person name="Tanaka T."/>
            <person name="Terpstra P."/>
            <person name="Tognoni A."/>
            <person name="Tosato V."/>
            <person name="Uchiyama S."/>
            <person name="Vandenbol M."/>
            <person name="Vannier F."/>
            <person name="Vassarotti A."/>
            <person name="Viari A."/>
            <person name="Wambutt R."/>
            <person name="Wedler E."/>
            <person name="Wedler H."/>
            <person name="Weitzenegger T."/>
            <person name="Winters P."/>
            <person name="Wipat A."/>
            <person name="Yamamoto H."/>
            <person name="Yamane K."/>
            <person name="Yasumoto K."/>
            <person name="Yata K."/>
            <person name="Yoshida K."/>
            <person name="Yoshikawa H.-F."/>
            <person name="Zumstein E."/>
            <person name="Yoshikawa H."/>
            <person name="Danchin A."/>
        </authorList>
    </citation>
    <scope>NUCLEOTIDE SEQUENCE [LARGE SCALE GENOMIC DNA]</scope>
    <source>
        <strain>168</strain>
    </source>
</reference>
<reference key="4">
    <citation type="journal article" date="1999" name="Genome Res.">
        <title>Detecting and analyzing DNA sequencing errors: toward a higher quality of the Bacillus subtilis genome sequence.</title>
        <authorList>
            <person name="Medigue C."/>
            <person name="Rose M."/>
            <person name="Viari A."/>
            <person name="Danchin A."/>
        </authorList>
    </citation>
    <scope>SEQUENCE REVISION</scope>
</reference>
<reference key="5">
    <citation type="journal article" date="1989" name="Mol. Microbiol.">
        <title>Phosphoenolpyruvate:sugar phosphotransferase system of Bacillus subtilis: nucleotide sequence of ptsX, ptsH and the 5'-end of ptsI and evidence for a ptsHI operon.</title>
        <authorList>
            <person name="Gonzy-Treboul G."/>
            <person name="Zagorec M."/>
            <person name="Rain-Guion M.-C."/>
            <person name="Steinmetz M."/>
        </authorList>
    </citation>
    <scope>NUCLEOTIDE SEQUENCE [GENOMIC DNA] OF 1-102</scope>
    <source>
        <strain>168</strain>
    </source>
</reference>
<reference key="6">
    <citation type="journal article" date="1993" name="J. Bacteriol.">
        <title>Molecular cloning and characterization of the Bacillus subtilis spore photoproduct lyase (spl) gene, which is involved in repair of UV radiation-induced DNA damage during spore germination.</title>
        <authorList>
            <person name="Fajardo-Cavazos P."/>
            <person name="Salazar C."/>
            <person name="Nicholson W.L."/>
        </authorList>
    </citation>
    <scope>NUCLEOTIDE SEQUENCE [GENOMIC DNA] OF 398-570</scope>
    <source>
        <strain>168</strain>
    </source>
</reference>
<reference key="7">
    <citation type="journal article" date="1992" name="Mol. Microbiol.">
        <title>Amino acid sequences of several Bacillus subtilis proteins modified by apparent guanylylation.</title>
        <authorList>
            <person name="Mitchell C."/>
            <person name="Morris P.W."/>
            <person name="Vary J.C."/>
        </authorList>
    </citation>
    <scope>PROTEIN SEQUENCE OF 1-13</scope>
</reference>
<reference key="8">
    <citation type="journal article" date="2013" name="Mol. Microbiol.">
        <title>Flotillins functionally organize the bacterial membrane.</title>
        <authorList>
            <person name="Bach J.N."/>
            <person name="Bramkamp M."/>
        </authorList>
    </citation>
    <scope>INTERACTION WITH FLOT</scope>
    <scope>SUBCELLULAR LOCATION</scope>
    <source>
        <strain>168</strain>
    </source>
</reference>
<keyword id="KW-0963">Cytoplasm</keyword>
<keyword id="KW-0903">Direct protein sequencing</keyword>
<keyword id="KW-0418">Kinase</keyword>
<keyword id="KW-0460">Magnesium</keyword>
<keyword id="KW-0472">Membrane</keyword>
<keyword id="KW-0479">Metal-binding</keyword>
<keyword id="KW-0598">Phosphotransferase system</keyword>
<keyword id="KW-1185">Reference proteome</keyword>
<keyword id="KW-0762">Sugar transport</keyword>
<keyword id="KW-0808">Transferase</keyword>
<keyword id="KW-0813">Transport</keyword>
<protein>
    <recommendedName>
        <fullName evidence="1">Phosphoenolpyruvate-protein phosphotransferase</fullName>
        <ecNumber evidence="1">2.7.3.9</ecNumber>
    </recommendedName>
    <alternativeName>
        <fullName evidence="1">Phosphotransferase system, enzyme I</fullName>
    </alternativeName>
</protein>
<organism>
    <name type="scientific">Bacillus subtilis (strain 168)</name>
    <dbReference type="NCBI Taxonomy" id="224308"/>
    <lineage>
        <taxon>Bacteria</taxon>
        <taxon>Bacillati</taxon>
        <taxon>Bacillota</taxon>
        <taxon>Bacilli</taxon>
        <taxon>Bacillales</taxon>
        <taxon>Bacillaceae</taxon>
        <taxon>Bacillus</taxon>
    </lineage>
</organism>
<feature type="chain" id="PRO_0000147059" description="Phosphoenolpyruvate-protein phosphotransferase">
    <location>
        <begin position="1"/>
        <end position="570"/>
    </location>
</feature>
<feature type="active site" description="Tele-phosphohistidine intermediate" evidence="1">
    <location>
        <position position="189"/>
    </location>
</feature>
<feature type="active site" description="Proton donor" evidence="1">
    <location>
        <position position="502"/>
    </location>
</feature>
<feature type="binding site" evidence="2">
    <location>
        <position position="296"/>
    </location>
    <ligand>
        <name>phosphoenolpyruvate</name>
        <dbReference type="ChEBI" id="CHEBI:58702"/>
    </ligand>
</feature>
<feature type="binding site" evidence="1">
    <location>
        <position position="332"/>
    </location>
    <ligand>
        <name>phosphoenolpyruvate</name>
        <dbReference type="ChEBI" id="CHEBI:58702"/>
    </ligand>
</feature>
<feature type="binding site" evidence="1">
    <location>
        <position position="431"/>
    </location>
    <ligand>
        <name>Mg(2+)</name>
        <dbReference type="ChEBI" id="CHEBI:18420"/>
    </ligand>
</feature>
<feature type="binding site" evidence="1">
    <location>
        <begin position="454"/>
        <end position="455"/>
    </location>
    <ligand>
        <name>phosphoenolpyruvate</name>
        <dbReference type="ChEBI" id="CHEBI:58702"/>
    </ligand>
</feature>
<feature type="binding site" evidence="1">
    <location>
        <position position="455"/>
    </location>
    <ligand>
        <name>Mg(2+)</name>
        <dbReference type="ChEBI" id="CHEBI:18420"/>
    </ligand>
</feature>
<feature type="binding site" evidence="2">
    <location>
        <position position="465"/>
    </location>
    <ligand>
        <name>phosphoenolpyruvate</name>
        <dbReference type="ChEBI" id="CHEBI:58702"/>
    </ligand>
</feature>
<comment type="function">
    <text evidence="1">General (non sugar-specific) component of the phosphoenolpyruvate-dependent sugar phosphotransferase system (sugar PTS). This major carbohydrate active-transport system catalyzes the phosphorylation of incoming sugar substrates concomitantly with their translocation across the cell membrane. Enzyme I transfers the phosphoryl group from phosphoenolpyruvate (PEP) to the phosphoryl carrier protein (HPr).</text>
</comment>
<comment type="catalytic activity">
    <reaction evidence="1">
        <text>L-histidyl-[protein] + phosphoenolpyruvate = N(pros)-phospho-L-histidyl-[protein] + pyruvate</text>
        <dbReference type="Rhea" id="RHEA:23880"/>
        <dbReference type="Rhea" id="RHEA-COMP:9745"/>
        <dbReference type="Rhea" id="RHEA-COMP:9746"/>
        <dbReference type="ChEBI" id="CHEBI:15361"/>
        <dbReference type="ChEBI" id="CHEBI:29979"/>
        <dbReference type="ChEBI" id="CHEBI:58702"/>
        <dbReference type="ChEBI" id="CHEBI:64837"/>
        <dbReference type="EC" id="2.7.3.9"/>
    </reaction>
</comment>
<comment type="cofactor">
    <cofactor evidence="1">
        <name>Mg(2+)</name>
        <dbReference type="ChEBI" id="CHEBI:18420"/>
    </cofactor>
</comment>
<comment type="subunit">
    <text evidence="1 3">Homodimer (By similarity). Interacts with FloT (PubMed:23651456).</text>
</comment>
<comment type="subcellular location">
    <subcellularLocation>
        <location evidence="4">Cytoplasm</location>
    </subcellularLocation>
    <subcellularLocation>
        <location evidence="3">Membrane raft</location>
    </subcellularLocation>
    <text evidence="3">Present in detergent-resistant membrane (DRM) fractions that may be equivalent to eukaryotic membrane rafts; these rafts include proteins involved in signaling, molecule trafficking and protein secretion.</text>
</comment>
<comment type="domain">
    <text evidence="1">The N-terminal domain contains the HPr binding site, the central domain the pyrophosphate/phosphate carrier histidine, and the C-terminal domain the pyruvate binding site.</text>
</comment>
<comment type="miscellaneous">
    <text evidence="1">The reaction takes place in three steps, mediated by a phosphocarrier histidine residue located on the surface of the central domain. The two first partial reactions are catalyzed at an active site located on the N-terminal domain, and the third partial reaction is catalyzed at an active site located on the C-terminal domain. For catalytic turnover, the central domain swivels from the concave surface of the N-terminal domain to that of the C-terminal domain.</text>
</comment>
<comment type="similarity">
    <text evidence="4">Belongs to the PEP-utilizing enzyme family.</text>
</comment>
<accession>P08838</accession>
<accession>O31692</accession>
<name>PT1_BACSU</name>
<proteinExistence type="evidence at protein level"/>
<evidence type="ECO:0000250" key="1">
    <source>
        <dbReference type="UniProtKB" id="P08839"/>
    </source>
</evidence>
<evidence type="ECO:0000250" key="2">
    <source>
        <dbReference type="UniProtKB" id="P23533"/>
    </source>
</evidence>
<evidence type="ECO:0000269" key="3">
    <source>
    </source>
</evidence>
<evidence type="ECO:0000305" key="4"/>
<dbReference type="EC" id="2.7.3.9" evidence="1"/>
<dbReference type="EMBL" id="M98359">
    <property type="protein sequence ID" value="AAB52374.1"/>
    <property type="molecule type" value="Genomic_DNA"/>
</dbReference>
<dbReference type="EMBL" id="AL009126">
    <property type="protein sequence ID" value="CAB13264.2"/>
    <property type="molecule type" value="Genomic_DNA"/>
</dbReference>
<dbReference type="EMBL" id="X12832">
    <property type="protein sequence ID" value="CAA31318.1"/>
    <property type="molecule type" value="Genomic_DNA"/>
</dbReference>
<dbReference type="EMBL" id="L08809">
    <property type="protein sequence ID" value="AAA22414.1"/>
    <property type="molecule type" value="Genomic_DNA"/>
</dbReference>
<dbReference type="PIR" id="C46238">
    <property type="entry name" value="C46238"/>
</dbReference>
<dbReference type="RefSeq" id="NP_389274.2">
    <property type="nucleotide sequence ID" value="NC_000964.3"/>
</dbReference>
<dbReference type="SMR" id="P08838"/>
<dbReference type="FunCoup" id="P08838">
    <property type="interactions" value="515"/>
</dbReference>
<dbReference type="IntAct" id="P08838">
    <property type="interactions" value="4"/>
</dbReference>
<dbReference type="MINT" id="P08838"/>
<dbReference type="STRING" id="224308.BSU13910"/>
<dbReference type="jPOST" id="P08838"/>
<dbReference type="PaxDb" id="224308-BSU13910"/>
<dbReference type="EnsemblBacteria" id="CAB13264">
    <property type="protein sequence ID" value="CAB13264"/>
    <property type="gene ID" value="BSU_13910"/>
</dbReference>
<dbReference type="GeneID" id="939253"/>
<dbReference type="KEGG" id="bsu:BSU13910"/>
<dbReference type="PATRIC" id="fig|224308.179.peg.1517"/>
<dbReference type="eggNOG" id="COG1080">
    <property type="taxonomic scope" value="Bacteria"/>
</dbReference>
<dbReference type="InParanoid" id="P08838"/>
<dbReference type="OrthoDB" id="9765468at2"/>
<dbReference type="PhylomeDB" id="P08838"/>
<dbReference type="BioCyc" id="BSUB:BSU13910-MONOMER"/>
<dbReference type="BRENDA" id="2.7.3.9">
    <property type="organism ID" value="658"/>
</dbReference>
<dbReference type="Proteomes" id="UP000001570">
    <property type="component" value="Chromosome"/>
</dbReference>
<dbReference type="GO" id="GO:0005737">
    <property type="term" value="C:cytoplasm"/>
    <property type="evidence" value="ECO:0007669"/>
    <property type="project" value="UniProtKB-SubCell"/>
</dbReference>
<dbReference type="GO" id="GO:0045121">
    <property type="term" value="C:membrane raft"/>
    <property type="evidence" value="ECO:0007669"/>
    <property type="project" value="UniProtKB-SubCell"/>
</dbReference>
<dbReference type="GO" id="GO:0016301">
    <property type="term" value="F:kinase activity"/>
    <property type="evidence" value="ECO:0007669"/>
    <property type="project" value="UniProtKB-KW"/>
</dbReference>
<dbReference type="GO" id="GO:0046872">
    <property type="term" value="F:metal ion binding"/>
    <property type="evidence" value="ECO:0007669"/>
    <property type="project" value="UniProtKB-KW"/>
</dbReference>
<dbReference type="GO" id="GO:0008965">
    <property type="term" value="F:phosphoenolpyruvate-protein phosphotransferase activity"/>
    <property type="evidence" value="ECO:0000318"/>
    <property type="project" value="GO_Central"/>
</dbReference>
<dbReference type="GO" id="GO:0015764">
    <property type="term" value="P:N-acetylglucosamine transport"/>
    <property type="evidence" value="ECO:0000318"/>
    <property type="project" value="GO_Central"/>
</dbReference>
<dbReference type="GO" id="GO:0009401">
    <property type="term" value="P:phosphoenolpyruvate-dependent sugar phosphotransferase system"/>
    <property type="evidence" value="ECO:0007669"/>
    <property type="project" value="UniProtKB-KW"/>
</dbReference>
<dbReference type="FunFam" id="1.10.274.10:FF:000001">
    <property type="entry name" value="Phosphoenolpyruvate-protein phosphotransferase"/>
    <property type="match status" value="1"/>
</dbReference>
<dbReference type="FunFam" id="3.20.20.60:FF:000007">
    <property type="entry name" value="Phosphoenolpyruvate-protein phosphotransferase"/>
    <property type="match status" value="1"/>
</dbReference>
<dbReference type="Gene3D" id="3.20.20.60">
    <property type="entry name" value="Phosphoenolpyruvate-binding domains"/>
    <property type="match status" value="1"/>
</dbReference>
<dbReference type="Gene3D" id="3.50.30.10">
    <property type="entry name" value="Phosphohistidine domain"/>
    <property type="match status" value="1"/>
</dbReference>
<dbReference type="Gene3D" id="1.10.274.10">
    <property type="entry name" value="PtsI, HPr-binding domain"/>
    <property type="match status" value="1"/>
</dbReference>
<dbReference type="InterPro" id="IPR008279">
    <property type="entry name" value="PEP-util_enz_mobile_dom"/>
</dbReference>
<dbReference type="InterPro" id="IPR050499">
    <property type="entry name" value="PEP-utilizing_PTS_enzyme"/>
</dbReference>
<dbReference type="InterPro" id="IPR018274">
    <property type="entry name" value="PEP_util_AS"/>
</dbReference>
<dbReference type="InterPro" id="IPR000121">
    <property type="entry name" value="PEP_util_C"/>
</dbReference>
<dbReference type="InterPro" id="IPR023151">
    <property type="entry name" value="PEP_util_CS"/>
</dbReference>
<dbReference type="InterPro" id="IPR036637">
    <property type="entry name" value="Phosphohistidine_dom_sf"/>
</dbReference>
<dbReference type="InterPro" id="IPR024692">
    <property type="entry name" value="PTS_EI"/>
</dbReference>
<dbReference type="InterPro" id="IPR006318">
    <property type="entry name" value="PTS_EI-like"/>
</dbReference>
<dbReference type="InterPro" id="IPR008731">
    <property type="entry name" value="PTS_EIN"/>
</dbReference>
<dbReference type="InterPro" id="IPR036618">
    <property type="entry name" value="PtsI_HPr-bd_sf"/>
</dbReference>
<dbReference type="InterPro" id="IPR015813">
    <property type="entry name" value="Pyrv/PenolPyrv_kinase-like_dom"/>
</dbReference>
<dbReference type="InterPro" id="IPR040442">
    <property type="entry name" value="Pyrv_kinase-like_dom_sf"/>
</dbReference>
<dbReference type="NCBIfam" id="TIGR01417">
    <property type="entry name" value="PTS_I_fam"/>
    <property type="match status" value="1"/>
</dbReference>
<dbReference type="PANTHER" id="PTHR46244">
    <property type="entry name" value="PHOSPHOENOLPYRUVATE-PROTEIN PHOSPHOTRANSFERASE"/>
    <property type="match status" value="1"/>
</dbReference>
<dbReference type="PANTHER" id="PTHR46244:SF3">
    <property type="entry name" value="PHOSPHOENOLPYRUVATE-PROTEIN PHOSPHOTRANSFERASE"/>
    <property type="match status" value="1"/>
</dbReference>
<dbReference type="Pfam" id="PF05524">
    <property type="entry name" value="PEP-utilisers_N"/>
    <property type="match status" value="1"/>
</dbReference>
<dbReference type="Pfam" id="PF00391">
    <property type="entry name" value="PEP-utilizers"/>
    <property type="match status" value="1"/>
</dbReference>
<dbReference type="Pfam" id="PF02896">
    <property type="entry name" value="PEP-utilizers_C"/>
    <property type="match status" value="1"/>
</dbReference>
<dbReference type="PIRSF" id="PIRSF000732">
    <property type="entry name" value="PTS_enzyme_I"/>
    <property type="match status" value="1"/>
</dbReference>
<dbReference type="PRINTS" id="PR01736">
    <property type="entry name" value="PHPHTRNFRASE"/>
</dbReference>
<dbReference type="SUPFAM" id="SSF47831">
    <property type="entry name" value="Enzyme I of the PEP:sugar phosphotransferase system HPr-binding (sub)domain"/>
    <property type="match status" value="1"/>
</dbReference>
<dbReference type="SUPFAM" id="SSF51621">
    <property type="entry name" value="Phosphoenolpyruvate/pyruvate domain"/>
    <property type="match status" value="1"/>
</dbReference>
<dbReference type="SUPFAM" id="SSF52009">
    <property type="entry name" value="Phosphohistidine domain"/>
    <property type="match status" value="1"/>
</dbReference>
<dbReference type="PROSITE" id="PS00742">
    <property type="entry name" value="PEP_ENZYMES_2"/>
    <property type="match status" value="1"/>
</dbReference>
<dbReference type="PROSITE" id="PS00370">
    <property type="entry name" value="PEP_ENZYMES_PHOS_SITE"/>
    <property type="match status" value="1"/>
</dbReference>
<sequence length="570" mass="63079">MQELKGIGASAGIAIAKAYRLEEPDLTVEKKNISDSEAEVSRFDEAIARSKEELEKIKEHALKELGQDKADIFSAHLLVLSDPELLNPVKEKISTDSVNAEFALKETSSMFVTMFESMDNEYMKERAADIRDVTKRVTGHLLGVEIPNPSMISEEVIIVAEDLTPSDTAQLNREFVKGFTTDIGGRTSHSAIMARSLEIPAVVGTKAATGTIQNGVTVIVDGINGDVIIDPSAETVKEYEEKHNAYLAQKAEWAKLVNEPTVSKDGHHVELAANIGTPDDVKGVLENGGEAVGLYRTEFLYMGRDQLPTEDEQFDAYKTVLERMEGKSVVVRTLDIGGDKELPYLQLPKEMNPFLGYRAIRLCLEEQEIFRTQLRALLRASTYGNLKIMFPMIATVNEFKEAKAILLEEKEKLVKAGQAVSDDIEVGMMVEIPSTAVIADQFAKEVDFFSIGTNDLIQYTMAADRMNERVSYLYQPYNPAILRLITLVIEAAHKEGKWVGMCGEMAGDEIAIPILLGLGLDEFSMSATSILPARTQISKLSKQEAESFKEKILSMSTTEEVVAFVKETFK</sequence>
<gene>
    <name type="primary">ptsI</name>
    <name type="ordered locus">BSU13910</name>
</gene>